<accession>P21471</accession>
<accession>P70982</accession>
<dbReference type="EMBL" id="U43929">
    <property type="protein sequence ID" value="AAC45955.1"/>
    <property type="molecule type" value="Genomic_DNA"/>
</dbReference>
<dbReference type="EMBL" id="D64127">
    <property type="protein sequence ID" value="BAA11006.1"/>
    <property type="molecule type" value="Genomic_DNA"/>
</dbReference>
<dbReference type="EMBL" id="AL009126">
    <property type="protein sequence ID" value="CAB11891.1"/>
    <property type="molecule type" value="Genomic_DNA"/>
</dbReference>
<dbReference type="PIR" id="A69700">
    <property type="entry name" value="A69700"/>
</dbReference>
<dbReference type="RefSeq" id="NP_387996.1">
    <property type="nucleotide sequence ID" value="NC_000964.3"/>
</dbReference>
<dbReference type="RefSeq" id="WP_003156464.1">
    <property type="nucleotide sequence ID" value="NZ_OZ025638.1"/>
</dbReference>
<dbReference type="PDB" id="3J9W">
    <property type="method" value="EM"/>
    <property type="resolution" value="3.90 A"/>
    <property type="chains" value="AJ=1-102"/>
</dbReference>
<dbReference type="PDB" id="5NJT">
    <property type="method" value="EM"/>
    <property type="resolution" value="3.80 A"/>
    <property type="chains" value="J=1-102"/>
</dbReference>
<dbReference type="PDB" id="6HA1">
    <property type="method" value="EM"/>
    <property type="resolution" value="3.10 A"/>
    <property type="chains" value="j=1-102"/>
</dbReference>
<dbReference type="PDB" id="6HA8">
    <property type="method" value="EM"/>
    <property type="resolution" value="3.50 A"/>
    <property type="chains" value="j=1-102"/>
</dbReference>
<dbReference type="PDB" id="6HTQ">
    <property type="method" value="EM"/>
    <property type="resolution" value="4.50 A"/>
    <property type="chains" value="j=6-100"/>
</dbReference>
<dbReference type="PDB" id="7O5B">
    <property type="method" value="EM"/>
    <property type="resolution" value="3.33 A"/>
    <property type="chains" value="J=1-102"/>
</dbReference>
<dbReference type="PDB" id="7QGU">
    <property type="method" value="EM"/>
    <property type="resolution" value="4.75 A"/>
    <property type="chains" value="o=1-102"/>
</dbReference>
<dbReference type="PDB" id="7QH4">
    <property type="method" value="EM"/>
    <property type="resolution" value="5.45 A"/>
    <property type="chains" value="n=1-102"/>
</dbReference>
<dbReference type="PDB" id="7QV1">
    <property type="method" value="EM"/>
    <property type="resolution" value="3.50 A"/>
    <property type="chains" value="j=1-102"/>
</dbReference>
<dbReference type="PDB" id="7QV2">
    <property type="method" value="EM"/>
    <property type="resolution" value="3.50 A"/>
    <property type="chains" value="j=1-102"/>
</dbReference>
<dbReference type="PDB" id="7QV3">
    <property type="method" value="EM"/>
    <property type="resolution" value="5.14 A"/>
    <property type="chains" value="j=1-102"/>
</dbReference>
<dbReference type="PDB" id="8BUU">
    <property type="method" value="EM"/>
    <property type="resolution" value="2.90 A"/>
    <property type="chains" value="j=1-102"/>
</dbReference>
<dbReference type="PDB" id="8CDU">
    <property type="method" value="EM"/>
    <property type="resolution" value="3.10 A"/>
    <property type="chains" value="K=1-102"/>
</dbReference>
<dbReference type="PDB" id="8CDV">
    <property type="method" value="EM"/>
    <property type="resolution" value="4.73 A"/>
    <property type="chains" value="K=1-102"/>
</dbReference>
<dbReference type="PDB" id="8CEC">
    <property type="method" value="EM"/>
    <property type="resolution" value="3.57 A"/>
    <property type="chains" value="R=1-102"/>
</dbReference>
<dbReference type="PDB" id="8CED">
    <property type="method" value="EM"/>
    <property type="resolution" value="4.15 A"/>
    <property type="chains" value="K=1-102"/>
</dbReference>
<dbReference type="PDB" id="8CEE">
    <property type="method" value="EM"/>
    <property type="resolution" value="3.70 A"/>
    <property type="chains" value="K=1-102"/>
</dbReference>
<dbReference type="PDB" id="8QCQ">
    <property type="method" value="EM"/>
    <property type="resolution" value="2.30 A"/>
    <property type="chains" value="j=1-102"/>
</dbReference>
<dbReference type="PDB" id="8QPP">
    <property type="method" value="EM"/>
    <property type="resolution" value="3.40 A"/>
    <property type="chains" value="J=1-102"/>
</dbReference>
<dbReference type="PDB" id="8R55">
    <property type="method" value="EM"/>
    <property type="resolution" value="3.57 A"/>
    <property type="chains" value="J=1-102"/>
</dbReference>
<dbReference type="PDBsum" id="3J9W"/>
<dbReference type="PDBsum" id="5NJT"/>
<dbReference type="PDBsum" id="6HA1"/>
<dbReference type="PDBsum" id="6HA8"/>
<dbReference type="PDBsum" id="6HTQ"/>
<dbReference type="PDBsum" id="7O5B"/>
<dbReference type="PDBsum" id="7QGU"/>
<dbReference type="PDBsum" id="7QH4"/>
<dbReference type="PDBsum" id="7QV1"/>
<dbReference type="PDBsum" id="7QV2"/>
<dbReference type="PDBsum" id="7QV3"/>
<dbReference type="PDBsum" id="8BUU"/>
<dbReference type="PDBsum" id="8CDU"/>
<dbReference type="PDBsum" id="8CDV"/>
<dbReference type="PDBsum" id="8CEC"/>
<dbReference type="PDBsum" id="8CED"/>
<dbReference type="PDBsum" id="8CEE"/>
<dbReference type="PDBsum" id="8QCQ"/>
<dbReference type="PDBsum" id="8QPP"/>
<dbReference type="PDBsum" id="8R55"/>
<dbReference type="EMDB" id="EMD-0176"/>
<dbReference type="EMDB" id="EMD-0177"/>
<dbReference type="EMDB" id="EMD-0270"/>
<dbReference type="EMDB" id="EMD-12734"/>
<dbReference type="EMDB" id="EMD-14157"/>
<dbReference type="EMDB" id="EMD-14158"/>
<dbReference type="EMDB" id="EMD-14159"/>
<dbReference type="EMDB" id="EMD-16246"/>
<dbReference type="EMDB" id="EMD-16595"/>
<dbReference type="EMDB" id="EMD-16596"/>
<dbReference type="EMDB" id="EMD-16605"/>
<dbReference type="EMDB" id="EMD-16606"/>
<dbReference type="EMDB" id="EMD-16607"/>
<dbReference type="EMDB" id="EMD-18332"/>
<dbReference type="EMDB" id="EMD-3656"/>
<dbReference type="SMR" id="P21471"/>
<dbReference type="FunCoup" id="P21471">
    <property type="interactions" value="760"/>
</dbReference>
<dbReference type="IntAct" id="P21471">
    <property type="interactions" value="1"/>
</dbReference>
<dbReference type="MINT" id="P21471"/>
<dbReference type="STRING" id="224308.BSU01150"/>
<dbReference type="jPOST" id="P21471"/>
<dbReference type="PaxDb" id="224308-BSU01150"/>
<dbReference type="EnsemblBacteria" id="CAB11891">
    <property type="protein sequence ID" value="CAB11891"/>
    <property type="gene ID" value="BSU_01150"/>
</dbReference>
<dbReference type="GeneID" id="93079279"/>
<dbReference type="GeneID" id="936825"/>
<dbReference type="KEGG" id="bsu:BSU01150"/>
<dbReference type="PATRIC" id="fig|224308.179.peg.118"/>
<dbReference type="eggNOG" id="COG0051">
    <property type="taxonomic scope" value="Bacteria"/>
</dbReference>
<dbReference type="InParanoid" id="P21471"/>
<dbReference type="OrthoDB" id="9804464at2"/>
<dbReference type="PhylomeDB" id="P21471"/>
<dbReference type="BioCyc" id="BSUB:BSU01150-MONOMER"/>
<dbReference type="PRO" id="PR:P21471"/>
<dbReference type="Proteomes" id="UP000001570">
    <property type="component" value="Chromosome"/>
</dbReference>
<dbReference type="GO" id="GO:0015935">
    <property type="term" value="C:small ribosomal subunit"/>
    <property type="evidence" value="ECO:0000318"/>
    <property type="project" value="GO_Central"/>
</dbReference>
<dbReference type="GO" id="GO:0003735">
    <property type="term" value="F:structural constituent of ribosome"/>
    <property type="evidence" value="ECO:0000318"/>
    <property type="project" value="GO_Central"/>
</dbReference>
<dbReference type="GO" id="GO:0000049">
    <property type="term" value="F:tRNA binding"/>
    <property type="evidence" value="ECO:0007669"/>
    <property type="project" value="UniProtKB-UniRule"/>
</dbReference>
<dbReference type="GO" id="GO:0006412">
    <property type="term" value="P:translation"/>
    <property type="evidence" value="ECO:0007669"/>
    <property type="project" value="UniProtKB-UniRule"/>
</dbReference>
<dbReference type="FunFam" id="3.30.70.600:FF:000001">
    <property type="entry name" value="30S ribosomal protein S10"/>
    <property type="match status" value="1"/>
</dbReference>
<dbReference type="Gene3D" id="3.30.70.600">
    <property type="entry name" value="Ribosomal protein S10 domain"/>
    <property type="match status" value="1"/>
</dbReference>
<dbReference type="HAMAP" id="MF_00508">
    <property type="entry name" value="Ribosomal_uS10"/>
    <property type="match status" value="1"/>
</dbReference>
<dbReference type="InterPro" id="IPR001848">
    <property type="entry name" value="Ribosomal_uS10"/>
</dbReference>
<dbReference type="InterPro" id="IPR018268">
    <property type="entry name" value="Ribosomal_uS10_CS"/>
</dbReference>
<dbReference type="InterPro" id="IPR027486">
    <property type="entry name" value="Ribosomal_uS10_dom"/>
</dbReference>
<dbReference type="InterPro" id="IPR036838">
    <property type="entry name" value="Ribosomal_uS10_dom_sf"/>
</dbReference>
<dbReference type="NCBIfam" id="NF001861">
    <property type="entry name" value="PRK00596.1"/>
    <property type="match status" value="1"/>
</dbReference>
<dbReference type="NCBIfam" id="TIGR01049">
    <property type="entry name" value="rpsJ_bact"/>
    <property type="match status" value="1"/>
</dbReference>
<dbReference type="PANTHER" id="PTHR11700">
    <property type="entry name" value="30S RIBOSOMAL PROTEIN S10 FAMILY MEMBER"/>
    <property type="match status" value="1"/>
</dbReference>
<dbReference type="Pfam" id="PF00338">
    <property type="entry name" value="Ribosomal_S10"/>
    <property type="match status" value="1"/>
</dbReference>
<dbReference type="PRINTS" id="PR00971">
    <property type="entry name" value="RIBOSOMALS10"/>
</dbReference>
<dbReference type="SMART" id="SM01403">
    <property type="entry name" value="Ribosomal_S10"/>
    <property type="match status" value="1"/>
</dbReference>
<dbReference type="SUPFAM" id="SSF54999">
    <property type="entry name" value="Ribosomal protein S10"/>
    <property type="match status" value="1"/>
</dbReference>
<dbReference type="PROSITE" id="PS00361">
    <property type="entry name" value="RIBOSOMAL_S10"/>
    <property type="match status" value="1"/>
</dbReference>
<gene>
    <name type="primary">rpsJ</name>
    <name type="synonym">tetA</name>
    <name type="ordered locus">BSU01150</name>
</gene>
<reference key="1">
    <citation type="journal article" date="1997" name="J. Bacteriol.">
        <title>Analysis of the Bacillus subtilis S10 ribosomal protein gene cluster identifies two promoters that may be responsible for transcription of the entire 15-kilobase S10-spc-alpha cluster.</title>
        <authorList>
            <person name="Li X."/>
            <person name="Lindahl L."/>
            <person name="Sha Y."/>
            <person name="Zengel J.M."/>
        </authorList>
    </citation>
    <scope>NUCLEOTIDE SEQUENCE [GENOMIC DNA]</scope>
    <source>
        <strain>SG38</strain>
    </source>
</reference>
<reference key="2">
    <citation type="journal article" date="1996" name="Microbiology">
        <title>Sequence analysis of a 50 kb region between spo0H and rrnH on the Bacillus subtilis chromosome.</title>
        <authorList>
            <person name="Yasumoto K."/>
            <person name="Liu H."/>
            <person name="Jeong S.M."/>
            <person name="Ohashi Y."/>
            <person name="Kakinuma S."/>
            <person name="Tanaka K."/>
            <person name="Kawamura F."/>
            <person name="Yoshikawa H."/>
            <person name="Takahashi H."/>
        </authorList>
    </citation>
    <scope>NUCLEOTIDE SEQUENCE [GENOMIC DNA]</scope>
    <source>
        <strain>168</strain>
    </source>
</reference>
<reference key="3">
    <citation type="journal article" date="1997" name="Nature">
        <title>The complete genome sequence of the Gram-positive bacterium Bacillus subtilis.</title>
        <authorList>
            <person name="Kunst F."/>
            <person name="Ogasawara N."/>
            <person name="Moszer I."/>
            <person name="Albertini A.M."/>
            <person name="Alloni G."/>
            <person name="Azevedo V."/>
            <person name="Bertero M.G."/>
            <person name="Bessieres P."/>
            <person name="Bolotin A."/>
            <person name="Borchert S."/>
            <person name="Borriss R."/>
            <person name="Boursier L."/>
            <person name="Brans A."/>
            <person name="Braun M."/>
            <person name="Brignell S.C."/>
            <person name="Bron S."/>
            <person name="Brouillet S."/>
            <person name="Bruschi C.V."/>
            <person name="Caldwell B."/>
            <person name="Capuano V."/>
            <person name="Carter N.M."/>
            <person name="Choi S.-K."/>
            <person name="Codani J.-J."/>
            <person name="Connerton I.F."/>
            <person name="Cummings N.J."/>
            <person name="Daniel R.A."/>
            <person name="Denizot F."/>
            <person name="Devine K.M."/>
            <person name="Duesterhoeft A."/>
            <person name="Ehrlich S.D."/>
            <person name="Emmerson P.T."/>
            <person name="Entian K.-D."/>
            <person name="Errington J."/>
            <person name="Fabret C."/>
            <person name="Ferrari E."/>
            <person name="Foulger D."/>
            <person name="Fritz C."/>
            <person name="Fujita M."/>
            <person name="Fujita Y."/>
            <person name="Fuma S."/>
            <person name="Galizzi A."/>
            <person name="Galleron N."/>
            <person name="Ghim S.-Y."/>
            <person name="Glaser P."/>
            <person name="Goffeau A."/>
            <person name="Golightly E.J."/>
            <person name="Grandi G."/>
            <person name="Guiseppi G."/>
            <person name="Guy B.J."/>
            <person name="Haga K."/>
            <person name="Haiech J."/>
            <person name="Harwood C.R."/>
            <person name="Henaut A."/>
            <person name="Hilbert H."/>
            <person name="Holsappel S."/>
            <person name="Hosono S."/>
            <person name="Hullo M.-F."/>
            <person name="Itaya M."/>
            <person name="Jones L.-M."/>
            <person name="Joris B."/>
            <person name="Karamata D."/>
            <person name="Kasahara Y."/>
            <person name="Klaerr-Blanchard M."/>
            <person name="Klein C."/>
            <person name="Kobayashi Y."/>
            <person name="Koetter P."/>
            <person name="Koningstein G."/>
            <person name="Krogh S."/>
            <person name="Kumano M."/>
            <person name="Kurita K."/>
            <person name="Lapidus A."/>
            <person name="Lardinois S."/>
            <person name="Lauber J."/>
            <person name="Lazarevic V."/>
            <person name="Lee S.-M."/>
            <person name="Levine A."/>
            <person name="Liu H."/>
            <person name="Masuda S."/>
            <person name="Mauel C."/>
            <person name="Medigue C."/>
            <person name="Medina N."/>
            <person name="Mellado R.P."/>
            <person name="Mizuno M."/>
            <person name="Moestl D."/>
            <person name="Nakai S."/>
            <person name="Noback M."/>
            <person name="Noone D."/>
            <person name="O'Reilly M."/>
            <person name="Ogawa K."/>
            <person name="Ogiwara A."/>
            <person name="Oudega B."/>
            <person name="Park S.-H."/>
            <person name="Parro V."/>
            <person name="Pohl T.M."/>
            <person name="Portetelle D."/>
            <person name="Porwollik S."/>
            <person name="Prescott A.M."/>
            <person name="Presecan E."/>
            <person name="Pujic P."/>
            <person name="Purnelle B."/>
            <person name="Rapoport G."/>
            <person name="Rey M."/>
            <person name="Reynolds S."/>
            <person name="Rieger M."/>
            <person name="Rivolta C."/>
            <person name="Rocha E."/>
            <person name="Roche B."/>
            <person name="Rose M."/>
            <person name="Sadaie Y."/>
            <person name="Sato T."/>
            <person name="Scanlan E."/>
            <person name="Schleich S."/>
            <person name="Schroeter R."/>
            <person name="Scoffone F."/>
            <person name="Sekiguchi J."/>
            <person name="Sekowska A."/>
            <person name="Seror S.J."/>
            <person name="Serror P."/>
            <person name="Shin B.-S."/>
            <person name="Soldo B."/>
            <person name="Sorokin A."/>
            <person name="Tacconi E."/>
            <person name="Takagi T."/>
            <person name="Takahashi H."/>
            <person name="Takemaru K."/>
            <person name="Takeuchi M."/>
            <person name="Tamakoshi A."/>
            <person name="Tanaka T."/>
            <person name="Terpstra P."/>
            <person name="Tognoni A."/>
            <person name="Tosato V."/>
            <person name="Uchiyama S."/>
            <person name="Vandenbol M."/>
            <person name="Vannier F."/>
            <person name="Vassarotti A."/>
            <person name="Viari A."/>
            <person name="Wambutt R."/>
            <person name="Wedler E."/>
            <person name="Wedler H."/>
            <person name="Weitzenegger T."/>
            <person name="Winters P."/>
            <person name="Wipat A."/>
            <person name="Yamamoto H."/>
            <person name="Yamane K."/>
            <person name="Yasumoto K."/>
            <person name="Yata K."/>
            <person name="Yoshida K."/>
            <person name="Yoshikawa H.-F."/>
            <person name="Zumstein E."/>
            <person name="Yoshikawa H."/>
            <person name="Danchin A."/>
        </authorList>
    </citation>
    <scope>NUCLEOTIDE SEQUENCE [LARGE SCALE GENOMIC DNA]</scope>
    <source>
        <strain>168</strain>
    </source>
</reference>
<reference key="4">
    <citation type="journal article" date="1982" name="Mol. Gen. Genet.">
        <title>Purification and characterization of 30S ribosomal proteins from Bacillus subtilis: correlation to Escherichia coli 30S proteins.</title>
        <authorList>
            <person name="Higo K."/>
            <person name="Otaka E."/>
            <person name="Osawa S."/>
        </authorList>
    </citation>
    <scope>PROTEIN SEQUENCE OF 2-29</scope>
</reference>
<reference evidence="5 6" key="5">
    <citation type="journal article" date="2018" name="Proc. Natl. Acad. Sci. U.S.A.">
        <title>Structural basis for antibiotic resistance mediated by the Bacillus subtilis ABCF ATPase VmlR.</title>
        <authorList>
            <person name="Crowe-McAuliffe C."/>
            <person name="Graf M."/>
            <person name="Huter P."/>
            <person name="Takada H."/>
            <person name="Abdelshahid M."/>
            <person name="Novacek J."/>
            <person name="Murina V."/>
            <person name="Atkinson G.C."/>
            <person name="Hauryliuk V."/>
            <person name="Wilson D.N."/>
        </authorList>
    </citation>
    <scope>STRUCTURE BY ELECTRON MICROSCOPY (3.10 ANGSTROMS) OF 1-102 WITH AND WITHOUT VIRGINIAMYCIN M</scope>
    <scope>SUBUNIT</scope>
</reference>
<evidence type="ECO:0000255" key="1">
    <source>
        <dbReference type="HAMAP-Rule" id="MF_00508"/>
    </source>
</evidence>
<evidence type="ECO:0000269" key="2">
    <source>
    </source>
</evidence>
<evidence type="ECO:0000269" key="3">
    <source>
    </source>
</evidence>
<evidence type="ECO:0000305" key="4"/>
<evidence type="ECO:0007744" key="5">
    <source>
        <dbReference type="PDB" id="6HA1"/>
    </source>
</evidence>
<evidence type="ECO:0007744" key="6">
    <source>
        <dbReference type="PDB" id="6HA8"/>
    </source>
</evidence>
<evidence type="ECO:0007829" key="7">
    <source>
        <dbReference type="PDB" id="8CDU"/>
    </source>
</evidence>
<keyword id="KW-0002">3D-structure</keyword>
<keyword id="KW-0903">Direct protein sequencing</keyword>
<keyword id="KW-1185">Reference proteome</keyword>
<keyword id="KW-0687">Ribonucleoprotein</keyword>
<keyword id="KW-0689">Ribosomal protein</keyword>
<name>RS10_BACSU</name>
<comment type="function">
    <text evidence="1">Involved in the binding of tRNA to the ribosomes.</text>
</comment>
<comment type="subunit">
    <text evidence="2">Part of the 30S ribosomal subunit.</text>
</comment>
<comment type="similarity">
    <text evidence="1 4">Belongs to the universal ribosomal protein uS10 family.</text>
</comment>
<sequence>MAKQKIRIRLKAYDHRILDQSAEKIVETAKRSGASVSGPIPLPTEKSVYTILRAVHKYKDSREQFEMRTHKRLIDIVNPTPQTVDALMRLDLPSGVDIEIKL</sequence>
<feature type="initiator methionine" description="Removed" evidence="3">
    <location>
        <position position="1"/>
    </location>
</feature>
<feature type="chain" id="PRO_0000146495" description="Small ribosomal subunit protein uS10">
    <location>
        <begin position="2"/>
        <end position="102"/>
    </location>
</feature>
<feature type="sequence conflict" description="In Ref. 1; AAC45955." evidence="4" ref="1">
    <original>R</original>
    <variation>L</variation>
    <location>
        <position position="53"/>
    </location>
</feature>
<feature type="strand" evidence="7">
    <location>
        <begin position="7"/>
        <end position="13"/>
    </location>
</feature>
<feature type="helix" evidence="7">
    <location>
        <begin position="15"/>
        <end position="32"/>
    </location>
</feature>
<feature type="strand" evidence="7">
    <location>
        <begin position="35"/>
        <end position="55"/>
    </location>
</feature>
<feature type="turn" evidence="7">
    <location>
        <begin position="56"/>
        <end position="58"/>
    </location>
</feature>
<feature type="strand" evidence="7">
    <location>
        <begin position="59"/>
        <end position="78"/>
    </location>
</feature>
<feature type="helix" evidence="7">
    <location>
        <begin position="81"/>
        <end position="89"/>
    </location>
</feature>
<feature type="strand" evidence="7">
    <location>
        <begin position="96"/>
        <end position="99"/>
    </location>
</feature>
<protein>
    <recommendedName>
        <fullName evidence="1">Small ribosomal subunit protein uS10</fullName>
    </recommendedName>
    <alternativeName>
        <fullName evidence="4">30S ribosomal protein S10</fullName>
    </alternativeName>
    <alternativeName>
        <fullName>BS13</fullName>
    </alternativeName>
</protein>
<proteinExistence type="evidence at protein level"/>
<organism>
    <name type="scientific">Bacillus subtilis (strain 168)</name>
    <dbReference type="NCBI Taxonomy" id="224308"/>
    <lineage>
        <taxon>Bacteria</taxon>
        <taxon>Bacillati</taxon>
        <taxon>Bacillota</taxon>
        <taxon>Bacilli</taxon>
        <taxon>Bacillales</taxon>
        <taxon>Bacillaceae</taxon>
        <taxon>Bacillus</taxon>
    </lineage>
</organism>